<geneLocation type="chloroplast"/>
<proteinExistence type="evidence at protein level"/>
<dbReference type="EC" id="1.10.3.9" evidence="1"/>
<dbReference type="EMBL" id="X13327">
    <property type="protein sequence ID" value="CAB58232.1"/>
    <property type="molecule type" value="Genomic_DNA"/>
</dbReference>
<dbReference type="PIR" id="S03195">
    <property type="entry name" value="F2NUD1"/>
</dbReference>
<dbReference type="RefSeq" id="YP_008239152.1">
    <property type="nucleotide sequence ID" value="NC_021761.1"/>
</dbReference>
<dbReference type="SMR" id="P10510"/>
<dbReference type="GeneID" id="16792733"/>
<dbReference type="GO" id="GO:0009535">
    <property type="term" value="C:chloroplast thylakoid membrane"/>
    <property type="evidence" value="ECO:0007669"/>
    <property type="project" value="UniProtKB-SubCell"/>
</dbReference>
<dbReference type="GO" id="GO:0009523">
    <property type="term" value="C:photosystem II"/>
    <property type="evidence" value="ECO:0007669"/>
    <property type="project" value="UniProtKB-KW"/>
</dbReference>
<dbReference type="GO" id="GO:0016168">
    <property type="term" value="F:chlorophyll binding"/>
    <property type="evidence" value="ECO:0007669"/>
    <property type="project" value="UniProtKB-UniRule"/>
</dbReference>
<dbReference type="GO" id="GO:0045156">
    <property type="term" value="F:electron transporter, transferring electrons within the cyclic electron transport pathway of photosynthesis activity"/>
    <property type="evidence" value="ECO:0007669"/>
    <property type="project" value="InterPro"/>
</dbReference>
<dbReference type="GO" id="GO:0005506">
    <property type="term" value="F:iron ion binding"/>
    <property type="evidence" value="ECO:0007669"/>
    <property type="project" value="UniProtKB-UniRule"/>
</dbReference>
<dbReference type="GO" id="GO:0016682">
    <property type="term" value="F:oxidoreductase activity, acting on diphenols and related substances as donors, oxygen as acceptor"/>
    <property type="evidence" value="ECO:0007669"/>
    <property type="project" value="UniProtKB-UniRule"/>
</dbReference>
<dbReference type="GO" id="GO:0010242">
    <property type="term" value="F:oxygen evolving activity"/>
    <property type="evidence" value="ECO:0007669"/>
    <property type="project" value="UniProtKB-EC"/>
</dbReference>
<dbReference type="GO" id="GO:0009772">
    <property type="term" value="P:photosynthetic electron transport in photosystem II"/>
    <property type="evidence" value="ECO:0007669"/>
    <property type="project" value="InterPro"/>
</dbReference>
<dbReference type="GO" id="GO:0009635">
    <property type="term" value="P:response to herbicide"/>
    <property type="evidence" value="ECO:0007669"/>
    <property type="project" value="UniProtKB-KW"/>
</dbReference>
<dbReference type="CDD" id="cd09289">
    <property type="entry name" value="Photosystem-II_D1"/>
    <property type="match status" value="1"/>
</dbReference>
<dbReference type="FunFam" id="1.20.85.10:FF:000002">
    <property type="entry name" value="Photosystem II protein D1"/>
    <property type="match status" value="1"/>
</dbReference>
<dbReference type="Gene3D" id="1.20.85.10">
    <property type="entry name" value="Photosystem II protein D1-like"/>
    <property type="match status" value="1"/>
</dbReference>
<dbReference type="HAMAP" id="MF_01379">
    <property type="entry name" value="PSII_PsbA_D1"/>
    <property type="match status" value="1"/>
</dbReference>
<dbReference type="InterPro" id="IPR055266">
    <property type="entry name" value="D1/D2"/>
</dbReference>
<dbReference type="InterPro" id="IPR036854">
    <property type="entry name" value="Photo_II_D1/D2_sf"/>
</dbReference>
<dbReference type="InterPro" id="IPR000484">
    <property type="entry name" value="Photo_RC_L/M"/>
</dbReference>
<dbReference type="InterPro" id="IPR055265">
    <property type="entry name" value="Photo_RC_L/M_CS"/>
</dbReference>
<dbReference type="InterPro" id="IPR005867">
    <property type="entry name" value="PSII_D1"/>
</dbReference>
<dbReference type="NCBIfam" id="TIGR01151">
    <property type="entry name" value="psbA"/>
    <property type="match status" value="1"/>
</dbReference>
<dbReference type="PANTHER" id="PTHR33149">
    <property type="entry name" value="PHOTOSYSTEM II PROTEIN D1"/>
    <property type="match status" value="1"/>
</dbReference>
<dbReference type="PANTHER" id="PTHR33149:SF58">
    <property type="entry name" value="PHOTOSYSTEM II PROTEIN D1"/>
    <property type="match status" value="1"/>
</dbReference>
<dbReference type="Pfam" id="PF00124">
    <property type="entry name" value="Photo_RC"/>
    <property type="match status" value="1"/>
</dbReference>
<dbReference type="PRINTS" id="PR00256">
    <property type="entry name" value="REACTNCENTRE"/>
</dbReference>
<dbReference type="SUPFAM" id="SSF81483">
    <property type="entry name" value="Bacterial photosystem II reaction centre, L and M subunits"/>
    <property type="match status" value="1"/>
</dbReference>
<dbReference type="PROSITE" id="PS00244">
    <property type="entry name" value="REACTION_CENTER"/>
    <property type="match status" value="1"/>
</dbReference>
<gene>
    <name evidence="1" type="primary">psbA</name>
</gene>
<organism>
    <name type="scientific">Secale cereale</name>
    <name type="common">Rye</name>
    <dbReference type="NCBI Taxonomy" id="4550"/>
    <lineage>
        <taxon>Eukaryota</taxon>
        <taxon>Viridiplantae</taxon>
        <taxon>Streptophyta</taxon>
        <taxon>Embryophyta</taxon>
        <taxon>Tracheophyta</taxon>
        <taxon>Spermatophyta</taxon>
        <taxon>Magnoliopsida</taxon>
        <taxon>Liliopsida</taxon>
        <taxon>Poales</taxon>
        <taxon>Poaceae</taxon>
        <taxon>BOP clade</taxon>
        <taxon>Pooideae</taxon>
        <taxon>Triticodae</taxon>
        <taxon>Triticeae</taxon>
        <taxon>Hordeinae</taxon>
        <taxon>Secale</taxon>
    </lineage>
</organism>
<name>PSBA_SECCE</name>
<evidence type="ECO:0000255" key="1">
    <source>
        <dbReference type="HAMAP-Rule" id="MF_01379"/>
    </source>
</evidence>
<evidence type="ECO:0000269" key="2">
    <source>
    </source>
</evidence>
<protein>
    <recommendedName>
        <fullName evidence="1">Photosystem II protein D1</fullName>
        <shortName evidence="1">PSII D1 protein</shortName>
        <ecNumber evidence="1">1.10.3.9</ecNumber>
    </recommendedName>
    <alternativeName>
        <fullName evidence="1">Photosystem II Q(B) protein</fullName>
    </alternativeName>
</protein>
<comment type="function">
    <text evidence="1">Photosystem II (PSII) is a light-driven water:plastoquinone oxidoreductase that uses light energy to abstract electrons from H(2)O, generating O(2) and a proton gradient subsequently used for ATP formation. It consists of a core antenna complex that captures photons, and an electron transfer chain that converts photonic excitation into a charge separation. The D1/D2 (PsbA/PsbD) reaction center heterodimer binds P680, the primary electron donor of PSII as well as several subsequent electron acceptors.</text>
</comment>
<comment type="catalytic activity">
    <reaction evidence="1">
        <text>2 a plastoquinone + 4 hnu + 2 H2O = 2 a plastoquinol + O2</text>
        <dbReference type="Rhea" id="RHEA:36359"/>
        <dbReference type="Rhea" id="RHEA-COMP:9561"/>
        <dbReference type="Rhea" id="RHEA-COMP:9562"/>
        <dbReference type="ChEBI" id="CHEBI:15377"/>
        <dbReference type="ChEBI" id="CHEBI:15379"/>
        <dbReference type="ChEBI" id="CHEBI:17757"/>
        <dbReference type="ChEBI" id="CHEBI:30212"/>
        <dbReference type="ChEBI" id="CHEBI:62192"/>
        <dbReference type="EC" id="1.10.3.9"/>
    </reaction>
</comment>
<comment type="cofactor">
    <text evidence="1">The D1/D2 heterodimer binds P680, chlorophylls that are the primary electron donor of PSII, and subsequent electron acceptors. It shares a non-heme iron and each subunit binds pheophytin, quinone, additional chlorophylls, carotenoids and lipids. D1 provides most of the ligands for the Mn4-Ca-O5 cluster of the oxygen-evolving complex (OEC). There is also a Cl(-1) ion associated with D1 and D2, which is required for oxygen evolution. The PSII complex binds additional chlorophylls, carotenoids and specific lipids.</text>
</comment>
<comment type="subunit">
    <text evidence="1">PSII is composed of 1 copy each of membrane proteins PsbA, PsbB, PsbC, PsbD, PsbE, PsbF, PsbH, PsbI, PsbJ, PsbK, PsbL, PsbM, PsbT, PsbX, PsbY, PsbZ, Psb30/Ycf12, at least 3 peripheral proteins of the oxygen-evolving complex and a large number of cofactors. It forms dimeric complexes.</text>
</comment>
<comment type="subcellular location">
    <subcellularLocation>
        <location evidence="1">Plastid</location>
        <location evidence="1">Chloroplast thylakoid membrane</location>
        <topology evidence="1">Multi-pass membrane protein</topology>
    </subcellularLocation>
</comment>
<comment type="PTM">
    <text evidence="2">Phosphorylated on threonine residue(s); phosphorylation increases with increasing light levels.</text>
</comment>
<comment type="PTM">
    <text evidence="1">Tyr-161 forms a radical intermediate that is referred to as redox-active TyrZ, YZ or Y-Z.</text>
</comment>
<comment type="PTM">
    <text evidence="1">C-terminally processed by CTPA; processing is essential to allow assembly of the oxygen-evolving complex and thus photosynthetic growth.</text>
</comment>
<comment type="miscellaneous">
    <text evidence="1">2 of the reaction center chlorophylls (ChlD1 and ChlD2) are entirely coordinated by water.</text>
</comment>
<comment type="miscellaneous">
    <text evidence="1">Herbicides such as atrazine, BNT, diuron or ioxynil bind in the Q(B) binding site and block subsequent electron transfer.</text>
</comment>
<comment type="similarity">
    <text evidence="1">Belongs to the reaction center PufL/M/PsbA/D family.</text>
</comment>
<feature type="initiator methionine" description="Removed" evidence="1">
    <location>
        <position position="1"/>
    </location>
</feature>
<feature type="chain" id="PRO_0000090468" description="Photosystem II protein D1" evidence="1">
    <location>
        <begin position="2"/>
        <end position="344"/>
    </location>
</feature>
<feature type="propeptide" id="PRO_0000316481" evidence="1">
    <location>
        <begin position="345"/>
        <end position="353"/>
    </location>
</feature>
<feature type="transmembrane region" description="Helical" evidence="1">
    <location>
        <begin position="29"/>
        <end position="46"/>
    </location>
</feature>
<feature type="transmembrane region" description="Helical" evidence="1">
    <location>
        <begin position="118"/>
        <end position="133"/>
    </location>
</feature>
<feature type="transmembrane region" description="Helical" evidence="1">
    <location>
        <begin position="142"/>
        <end position="156"/>
    </location>
</feature>
<feature type="transmembrane region" description="Helical" evidence="1">
    <location>
        <begin position="197"/>
        <end position="218"/>
    </location>
</feature>
<feature type="transmembrane region" description="Helical" evidence="1">
    <location>
        <begin position="274"/>
        <end position="288"/>
    </location>
</feature>
<feature type="binding site" description="axial binding residue" evidence="1">
    <location>
        <position position="118"/>
    </location>
    <ligand>
        <name>chlorophyll a</name>
        <dbReference type="ChEBI" id="CHEBI:58416"/>
        <label>ChlzD1</label>
    </ligand>
    <ligandPart>
        <name>Mg</name>
        <dbReference type="ChEBI" id="CHEBI:25107"/>
    </ligandPart>
</feature>
<feature type="binding site" evidence="1">
    <location>
        <position position="126"/>
    </location>
    <ligand>
        <name>pheophytin a</name>
        <dbReference type="ChEBI" id="CHEBI:136840"/>
        <label>D1</label>
    </ligand>
</feature>
<feature type="binding site" evidence="1">
    <location>
        <position position="170"/>
    </location>
    <ligand>
        <name>[CaMn4O5] cluster</name>
        <dbReference type="ChEBI" id="CHEBI:189552"/>
    </ligand>
</feature>
<feature type="binding site" evidence="1">
    <location>
        <position position="189"/>
    </location>
    <ligand>
        <name>[CaMn4O5] cluster</name>
        <dbReference type="ChEBI" id="CHEBI:189552"/>
    </ligand>
</feature>
<feature type="binding site" description="axial binding residue" evidence="1">
    <location>
        <position position="198"/>
    </location>
    <ligand>
        <name>chlorophyll a</name>
        <dbReference type="ChEBI" id="CHEBI:58416"/>
        <label>PD1</label>
    </ligand>
    <ligandPart>
        <name>Mg</name>
        <dbReference type="ChEBI" id="CHEBI:25107"/>
    </ligandPart>
</feature>
<feature type="binding site" evidence="1">
    <location>
        <position position="215"/>
    </location>
    <ligand>
        <name>a quinone</name>
        <dbReference type="ChEBI" id="CHEBI:132124"/>
        <label>B</label>
    </ligand>
</feature>
<feature type="binding site" evidence="1">
    <location>
        <position position="215"/>
    </location>
    <ligand>
        <name>Fe cation</name>
        <dbReference type="ChEBI" id="CHEBI:24875"/>
        <note>ligand shared with heterodimeric partner</note>
    </ligand>
</feature>
<feature type="binding site" evidence="1">
    <location>
        <begin position="264"/>
        <end position="265"/>
    </location>
    <ligand>
        <name>a quinone</name>
        <dbReference type="ChEBI" id="CHEBI:132124"/>
        <label>B</label>
    </ligand>
</feature>
<feature type="binding site" evidence="1">
    <location>
        <position position="272"/>
    </location>
    <ligand>
        <name>Fe cation</name>
        <dbReference type="ChEBI" id="CHEBI:24875"/>
        <note>ligand shared with heterodimeric partner</note>
    </ligand>
</feature>
<feature type="binding site" evidence="1">
    <location>
        <position position="332"/>
    </location>
    <ligand>
        <name>[CaMn4O5] cluster</name>
        <dbReference type="ChEBI" id="CHEBI:189552"/>
    </ligand>
</feature>
<feature type="binding site" evidence="1">
    <location>
        <position position="333"/>
    </location>
    <ligand>
        <name>[CaMn4O5] cluster</name>
        <dbReference type="ChEBI" id="CHEBI:189552"/>
    </ligand>
</feature>
<feature type="binding site" evidence="1">
    <location>
        <position position="342"/>
    </location>
    <ligand>
        <name>[CaMn4O5] cluster</name>
        <dbReference type="ChEBI" id="CHEBI:189552"/>
    </ligand>
</feature>
<feature type="binding site" evidence="1">
    <location>
        <position position="344"/>
    </location>
    <ligand>
        <name>[CaMn4O5] cluster</name>
        <dbReference type="ChEBI" id="CHEBI:189552"/>
    </ligand>
</feature>
<feature type="site" description="Tyrosine radical intermediate" evidence="1">
    <location>
        <position position="161"/>
    </location>
</feature>
<feature type="site" description="Stabilizes free radical intermediate" evidence="1">
    <location>
        <position position="190"/>
    </location>
</feature>
<feature type="site" description="Cleavage; by CTPA" evidence="1">
    <location>
        <begin position="344"/>
        <end position="345"/>
    </location>
</feature>
<feature type="modified residue" description="N-acetylthreonine" evidence="1">
    <location>
        <position position="2"/>
    </location>
</feature>
<feature type="modified residue" description="Phosphothreonine" evidence="1">
    <location>
        <position position="2"/>
    </location>
</feature>
<accession>P10510</accession>
<reference key="1">
    <citation type="journal article" date="1989" name="Nucleic Acids Res.">
        <title>Nucleotide sequence of the rye chloroplast psbA gene, encoding D1 protein of photosystem II.</title>
        <authorList>
            <person name="Zolotarev A.S."/>
            <person name="Kolosov V.L."/>
        </authorList>
    </citation>
    <scope>NUCLEOTIDE SEQUENCE [GENOMIC DNA]</scope>
</reference>
<reference key="2">
    <citation type="journal article" date="1998" name="FEBS Lett.">
        <title>Thylakoid protein phosphorylation in evolutionally divergent species with oxygenic photosynthesis.</title>
        <authorList>
            <person name="Pursiheimo S."/>
            <person name="Rintamaeki E."/>
            <person name="Baena-Gonzalez E."/>
            <person name="Aro E.-M."/>
        </authorList>
    </citation>
    <scope>PHOSPHORYLATION</scope>
    <scope>THYLAKOID LOCALIZATION</scope>
</reference>
<keyword id="KW-0007">Acetylation</keyword>
<keyword id="KW-0106">Calcium</keyword>
<keyword id="KW-0148">Chlorophyll</keyword>
<keyword id="KW-0150">Chloroplast</keyword>
<keyword id="KW-0157">Chromophore</keyword>
<keyword id="KW-0249">Electron transport</keyword>
<keyword id="KW-0359">Herbicide resistance</keyword>
<keyword id="KW-0408">Iron</keyword>
<keyword id="KW-0460">Magnesium</keyword>
<keyword id="KW-0464">Manganese</keyword>
<keyword id="KW-0472">Membrane</keyword>
<keyword id="KW-0479">Metal-binding</keyword>
<keyword id="KW-0560">Oxidoreductase</keyword>
<keyword id="KW-0597">Phosphoprotein</keyword>
<keyword id="KW-0602">Photosynthesis</keyword>
<keyword id="KW-0604">Photosystem II</keyword>
<keyword id="KW-0934">Plastid</keyword>
<keyword id="KW-0793">Thylakoid</keyword>
<keyword id="KW-0812">Transmembrane</keyword>
<keyword id="KW-1133">Transmembrane helix</keyword>
<keyword id="KW-0813">Transport</keyword>
<sequence>MTAILERRESTSLWGRFCNWITSTENRLYIGWFGVLMIPTLLTATSVFIIAFIAAPPVDIDGIREPVSGSLLYGNNIISGAIIPTSAAIGLHFYPIWEAASVDEWLYNGGPYELIVLHFLLGVACYMGREWELSFRLGMRPWIAVAYSAPVAAATAVFLIYPIGQGSFSDGMPLGISGTFNFMIVFQAEHNILMHPFHMLGVAGVFGGSLFSAMHGSLVTSSLIRETTENESANEGYKFGQEEETYNIVAAHGYFGRLIFQYASFNNSRSLHFFLAAWPVVGIWFTALGISTMAFNLNGFNFNQSVVDSQGRVINTWADIINRANLGMEVMHERNAHNFPLDLAAVEVPSING</sequence>